<proteinExistence type="evidence at protein level"/>
<gene>
    <name type="ORF">ORF26</name>
</gene>
<comment type="subcellular location">
    <subcellularLocation>
        <location evidence="2">Virion</location>
    </subcellularLocation>
</comment>
<comment type="miscellaneous">
    <text evidence="2">The virion does not contain any lipid membrane.</text>
</comment>
<reference key="1">
    <citation type="journal article" date="2006" name="Virology">
        <title>His1 and His2 are distantly related, spindle-shaped haloviruses belonging to the novel virus group, Salterprovirus.</title>
        <authorList>
            <person name="Bath C."/>
            <person name="Cukalac T."/>
            <person name="Porter K."/>
            <person name="Dyall-Smith M.L."/>
        </authorList>
    </citation>
    <scope>NUCLEOTIDE SEQUENCE [GENOMIC DNA]</scope>
</reference>
<reference key="2">
    <citation type="journal article" date="2013" name="Environ. Microbiol.">
        <title>Modified coat protein forms the flexible spindle-shaped virion of haloarchaeal virus His1.</title>
        <authorList>
            <person name="Pietilae M.K."/>
            <person name="Atanasova N.S."/>
            <person name="Oksanen H.M."/>
            <person name="Bamford D.H."/>
        </authorList>
    </citation>
    <scope>PROTEIN SEQUENCE OF 1-10 AND 166-180</scope>
    <scope>SUBCELLULAR LOCATION</scope>
</reference>
<organismHost>
    <name type="scientific">Haloarcula hispanica</name>
    <dbReference type="NCBI Taxonomy" id="51589"/>
</organismHost>
<name>VP26_HIS1I</name>
<keyword id="KW-0903">Direct protein sequencing</keyword>
<keyword id="KW-1185">Reference proteome</keyword>
<keyword id="KW-0946">Virion</keyword>
<feature type="chain" id="PRO_0000384894" description="Structural protein 26">
    <location>
        <begin position="1"/>
        <end position="281"/>
    </location>
</feature>
<feature type="region of interest" description="Hydrophobic" evidence="1">
    <location>
        <begin position="8"/>
        <end position="28"/>
    </location>
</feature>
<feature type="region of interest" description="Hydrophobic" evidence="1">
    <location>
        <begin position="196"/>
        <end position="216"/>
    </location>
</feature>
<feature type="region of interest" description="Hydrophobic" evidence="1">
    <location>
        <begin position="219"/>
        <end position="239"/>
    </location>
</feature>
<feature type="region of interest" description="Hydrophobic" evidence="1">
    <location>
        <begin position="255"/>
        <end position="275"/>
    </location>
</feature>
<evidence type="ECO:0000255" key="1"/>
<evidence type="ECO:0000269" key="2">
    <source>
    </source>
</evidence>
<accession>Q25BG9</accession>
<protein>
    <recommendedName>
        <fullName>Structural protein 26</fullName>
    </recommendedName>
</protein>
<organism>
    <name type="scientific">His1 virus (isolate Australia/Victoria)</name>
    <name type="common">His1V</name>
    <name type="synonym">Haloarcula hispanica virus 1</name>
    <dbReference type="NCBI Taxonomy" id="654912"/>
    <lineage>
        <taxon>Viruses</taxon>
        <taxon>Viruses incertae sedis</taxon>
        <taxon>Halspiviridae</taxon>
        <taxon>Salterprovirus</taxon>
        <taxon>Salterprovirus His1</taxon>
    </lineage>
</organism>
<sequence length="281" mass="30818">MNFTKTDFVISMGMTIAVIFMSFTFPALGMTGDSVQENEIPEFNITKGSADFAREQPEYPARPSEGTLTYKNNSANWADGRQTYLQKGDTEYLVSFFDNSDNQNPPEWKLNLIKFNSSGSYSESTIITEGESKTLTSADGSYEIGFNNLEIEDSAVGNETASVDWKVLEQPSDSTWIGRLPVVGGLISGANQLASVVGWIGAIIWHFVVQILVTIGNTLLIFYNIFVYFLEFMYWITTAYSGVVAGAPTAWASVIVAIPGILLGFEFVKLVALAISLLPLT</sequence>
<dbReference type="EMBL" id="AF191796">
    <property type="protein sequence ID" value="AAQ13744.1"/>
    <property type="molecule type" value="Genomic_DNA"/>
</dbReference>
<dbReference type="RefSeq" id="YP_529538.1">
    <property type="nucleotide sequence ID" value="NC_007914.1"/>
</dbReference>
<dbReference type="KEGG" id="vg:5142402"/>
<dbReference type="Proteomes" id="UP000007024">
    <property type="component" value="Segment"/>
</dbReference>
<dbReference type="GO" id="GO:0044423">
    <property type="term" value="C:virion component"/>
    <property type="evidence" value="ECO:0007669"/>
    <property type="project" value="UniProtKB-KW"/>
</dbReference>